<feature type="chain" id="PRO_0000197303" description="Metallothionein B">
    <location>
        <begin position="1"/>
        <end position="60"/>
    </location>
</feature>
<feature type="region of interest" description="Beta">
    <location>
        <begin position="1"/>
        <end position="28"/>
    </location>
</feature>
<feature type="region of interest" description="Alpha">
    <location>
        <begin position="29"/>
        <end position="60"/>
    </location>
</feature>
<feature type="binding site" evidence="2">
    <location>
        <position position="4"/>
    </location>
    <ligand>
        <name>a divalent metal cation</name>
        <dbReference type="ChEBI" id="CHEBI:60240"/>
        <label>1</label>
        <note>in cluster B</note>
    </ligand>
</feature>
<feature type="binding site" evidence="2">
    <location>
        <position position="6"/>
    </location>
    <ligand>
        <name>a divalent metal cation</name>
        <dbReference type="ChEBI" id="CHEBI:60240"/>
        <label>1</label>
        <note>in cluster B</note>
    </ligand>
</feature>
<feature type="binding site" evidence="2">
    <location>
        <position position="6"/>
    </location>
    <ligand>
        <name>a divalent metal cation</name>
        <dbReference type="ChEBI" id="CHEBI:60240"/>
        <label>2</label>
        <note>in cluster B</note>
    </ligand>
</feature>
<feature type="binding site" evidence="2">
    <location>
        <position position="12"/>
    </location>
    <ligand>
        <name>a divalent metal cation</name>
        <dbReference type="ChEBI" id="CHEBI:60240"/>
        <label>2</label>
        <note>in cluster B</note>
    </ligand>
</feature>
<feature type="binding site" evidence="2">
    <location>
        <position position="14"/>
    </location>
    <ligand>
        <name>a divalent metal cation</name>
        <dbReference type="ChEBI" id="CHEBI:60240"/>
        <label>2</label>
        <note>in cluster B</note>
    </ligand>
</feature>
<feature type="binding site" evidence="2">
    <location>
        <position position="14"/>
    </location>
    <ligand>
        <name>a divalent metal cation</name>
        <dbReference type="ChEBI" id="CHEBI:60240"/>
        <label>3</label>
        <note>in cluster B</note>
    </ligand>
</feature>
<feature type="binding site" evidence="2">
    <location>
        <position position="18"/>
    </location>
    <ligand>
        <name>a divalent metal cation</name>
        <dbReference type="ChEBI" id="CHEBI:60240"/>
        <label>3</label>
        <note>in cluster B</note>
    </ligand>
</feature>
<feature type="binding site" evidence="2">
    <location>
        <position position="20"/>
    </location>
    <ligand>
        <name>a divalent metal cation</name>
        <dbReference type="ChEBI" id="CHEBI:60240"/>
        <label>1</label>
        <note>in cluster B</note>
    </ligand>
</feature>
<feature type="binding site" evidence="2">
    <location>
        <position position="23"/>
    </location>
    <ligand>
        <name>a divalent metal cation</name>
        <dbReference type="ChEBI" id="CHEBI:60240"/>
        <label>1</label>
        <note>in cluster B</note>
    </ligand>
</feature>
<feature type="binding site" evidence="2">
    <location>
        <position position="23"/>
    </location>
    <ligand>
        <name>a divalent metal cation</name>
        <dbReference type="ChEBI" id="CHEBI:60240"/>
        <label>3</label>
        <note>in cluster B</note>
    </ligand>
</feature>
<feature type="binding site" evidence="2">
    <location>
        <position position="25"/>
    </location>
    <ligand>
        <name>a divalent metal cation</name>
        <dbReference type="ChEBI" id="CHEBI:60240"/>
        <label>2</label>
        <note>in cluster B</note>
    </ligand>
</feature>
<feature type="binding site" evidence="2">
    <location>
        <position position="28"/>
    </location>
    <ligand>
        <name>a divalent metal cation</name>
        <dbReference type="ChEBI" id="CHEBI:60240"/>
        <label>3</label>
        <note>in cluster B</note>
    </ligand>
</feature>
<feature type="binding site" evidence="2">
    <location>
        <position position="32"/>
    </location>
    <ligand>
        <name>a divalent metal cation</name>
        <dbReference type="ChEBI" id="CHEBI:60240"/>
        <label>4</label>
        <note>in cluster A</note>
    </ligand>
</feature>
<feature type="binding site" evidence="2">
    <location>
        <position position="33"/>
    </location>
    <ligand>
        <name>a divalent metal cation</name>
        <dbReference type="ChEBI" id="CHEBI:60240"/>
        <label>4</label>
        <note>in cluster A</note>
    </ligand>
</feature>
<feature type="binding site" evidence="2">
    <location>
        <position position="33"/>
    </location>
    <ligand>
        <name>a divalent metal cation</name>
        <dbReference type="ChEBI" id="CHEBI:60240"/>
        <label>5</label>
        <note>in cluster A</note>
    </ligand>
</feature>
<feature type="binding site" evidence="2">
    <location>
        <position position="35"/>
    </location>
    <ligand>
        <name>a divalent metal cation</name>
        <dbReference type="ChEBI" id="CHEBI:60240"/>
        <label>5</label>
        <note>in cluster A</note>
    </ligand>
</feature>
<feature type="binding site" evidence="2">
    <location>
        <position position="36"/>
    </location>
    <ligand>
        <name>a divalent metal cation</name>
        <dbReference type="ChEBI" id="CHEBI:60240"/>
        <label>5</label>
        <note>in cluster A</note>
    </ligand>
</feature>
<feature type="binding site" evidence="2">
    <location>
        <position position="36"/>
    </location>
    <ligand>
        <name>a divalent metal cation</name>
        <dbReference type="ChEBI" id="CHEBI:60240"/>
        <label>6</label>
        <note>in cluster A</note>
    </ligand>
</feature>
<feature type="binding site" evidence="2">
    <location>
        <position position="40"/>
    </location>
    <ligand>
        <name>a divalent metal cation</name>
        <dbReference type="ChEBI" id="CHEBI:60240"/>
        <label>6</label>
        <note>in cluster A</note>
    </ligand>
</feature>
<feature type="binding site" evidence="2">
    <location>
        <position position="43"/>
    </location>
    <ligand>
        <name>a divalent metal cation</name>
        <dbReference type="ChEBI" id="CHEBI:60240"/>
        <label>4</label>
        <note>in cluster A</note>
    </ligand>
</feature>
<feature type="binding site" evidence="2">
    <location>
        <position position="43"/>
    </location>
    <ligand>
        <name>a divalent metal cation</name>
        <dbReference type="ChEBI" id="CHEBI:60240"/>
        <label>6</label>
        <note>in cluster A</note>
    </ligand>
</feature>
<feature type="binding site" evidence="2">
    <location>
        <position position="47"/>
    </location>
    <ligand>
        <name>a divalent metal cation</name>
        <dbReference type="ChEBI" id="CHEBI:60240"/>
        <label>4</label>
        <note>in cluster A</note>
    </ligand>
</feature>
<feature type="binding site" evidence="2">
    <location>
        <position position="49"/>
    </location>
    <ligand>
        <name>a divalent metal cation</name>
        <dbReference type="ChEBI" id="CHEBI:60240"/>
        <label>5</label>
        <note>in cluster A</note>
    </ligand>
</feature>
<feature type="binding site" evidence="2">
    <location>
        <position position="49"/>
    </location>
    <ligand>
        <name>a divalent metal cation</name>
        <dbReference type="ChEBI" id="CHEBI:60240"/>
        <label>7</label>
        <note>in cluster A</note>
    </ligand>
</feature>
<feature type="binding site" evidence="3">
    <location>
        <position position="54"/>
    </location>
    <ligand>
        <name>a divalent metal cation</name>
        <dbReference type="ChEBI" id="CHEBI:60240"/>
        <label>7</label>
        <note>in cluster A</note>
    </ligand>
</feature>
<feature type="binding site" evidence="2">
    <location>
        <position position="58"/>
    </location>
    <ligand>
        <name>a divalent metal cation</name>
        <dbReference type="ChEBI" id="CHEBI:60240"/>
        <label>7</label>
        <note>in cluster A</note>
    </ligand>
</feature>
<feature type="binding site" evidence="2">
    <location>
        <position position="59"/>
    </location>
    <ligand>
        <name>a divalent metal cation</name>
        <dbReference type="ChEBI" id="CHEBI:60240"/>
        <label>6</label>
        <note>in cluster A</note>
    </ligand>
</feature>
<feature type="binding site" evidence="2">
    <location>
        <position position="59"/>
    </location>
    <ligand>
        <name>a divalent metal cation</name>
        <dbReference type="ChEBI" id="CHEBI:60240"/>
        <label>7</label>
        <note>in cluster A</note>
    </ligand>
</feature>
<name>MTB_PAGBO</name>
<dbReference type="EMBL" id="AJ007563">
    <property type="protein sequence ID" value="CAA07558.1"/>
    <property type="molecule type" value="mRNA"/>
</dbReference>
<dbReference type="SMR" id="P62681"/>
<dbReference type="GO" id="GO:0046872">
    <property type="term" value="F:metal ion binding"/>
    <property type="evidence" value="ECO:0007669"/>
    <property type="project" value="UniProtKB-KW"/>
</dbReference>
<dbReference type="FunFam" id="4.10.10.10:FF:000001">
    <property type="entry name" value="Metallothionein"/>
    <property type="match status" value="1"/>
</dbReference>
<dbReference type="Gene3D" id="4.10.10.10">
    <property type="entry name" value="Metallothionein Isoform II"/>
    <property type="match status" value="1"/>
</dbReference>
<dbReference type="InterPro" id="IPR017854">
    <property type="entry name" value="Metalthion_dom_sf"/>
</dbReference>
<dbReference type="InterPro" id="IPR023587">
    <property type="entry name" value="Metalthion_dom_sf_vert"/>
</dbReference>
<dbReference type="InterPro" id="IPR000006">
    <property type="entry name" value="Metalthion_vert"/>
</dbReference>
<dbReference type="InterPro" id="IPR018064">
    <property type="entry name" value="Metalthion_vert_metal_BS"/>
</dbReference>
<dbReference type="PANTHER" id="PTHR23299">
    <property type="entry name" value="METALLOTHIONEIN"/>
    <property type="match status" value="1"/>
</dbReference>
<dbReference type="PANTHER" id="PTHR23299:SF24">
    <property type="entry name" value="METALLOTHIONEIN-1X"/>
    <property type="match status" value="1"/>
</dbReference>
<dbReference type="Pfam" id="PF00131">
    <property type="entry name" value="Metallothio"/>
    <property type="match status" value="1"/>
</dbReference>
<dbReference type="PRINTS" id="PR00860">
    <property type="entry name" value="MTVERTEBRATE"/>
</dbReference>
<dbReference type="SUPFAM" id="SSF57868">
    <property type="entry name" value="Metallothionein"/>
    <property type="match status" value="1"/>
</dbReference>
<dbReference type="PROSITE" id="PS00203">
    <property type="entry name" value="METALLOTHIONEIN_VRT"/>
    <property type="match status" value="1"/>
</dbReference>
<comment type="function">
    <text evidence="1">Metallothioneins have a high content of cysteine residues that bind various heavy metals.</text>
</comment>
<comment type="domain">
    <text>Class I metallothioneins contain 2 metal-binding domains: four divalent ions are chelated within cluster A of the alpha domain and are coordinated via cysteinyl thiolate bridges to 11 cysteine ligands. Cluster B, the corresponding region within the beta domain, can ligate three divalent ions to 9 cysteines.</text>
</comment>
<comment type="similarity">
    <text evidence="4">Belongs to the metallothionein superfamily. Type 1 family.</text>
</comment>
<protein>
    <recommendedName>
        <fullName>Metallothionein B</fullName>
        <shortName>MT-B</shortName>
        <shortName>MT-II</shortName>
    </recommendedName>
</protein>
<sequence>MDPCECSKSGTCNCGGSCTCTNCSCTSCKKSCCPCCPSGCTKCASGCVCKGKTCDTSCCQ</sequence>
<evidence type="ECO:0000250" key="1"/>
<evidence type="ECO:0000250" key="2">
    <source>
        <dbReference type="UniProtKB" id="P02795"/>
    </source>
</evidence>
<evidence type="ECO:0000250" key="3">
    <source>
        <dbReference type="UniProtKB" id="P62339"/>
    </source>
</evidence>
<evidence type="ECO:0000305" key="4"/>
<proteinExistence type="inferred from homology"/>
<organism>
    <name type="scientific">Pagothenia borchgrevinki</name>
    <name type="common">Bald rockcod</name>
    <name type="synonym">Trematomus borchgrevinki</name>
    <dbReference type="NCBI Taxonomy" id="8213"/>
    <lineage>
        <taxon>Eukaryota</taxon>
        <taxon>Metazoa</taxon>
        <taxon>Chordata</taxon>
        <taxon>Craniata</taxon>
        <taxon>Vertebrata</taxon>
        <taxon>Euteleostomi</taxon>
        <taxon>Actinopterygii</taxon>
        <taxon>Neopterygii</taxon>
        <taxon>Teleostei</taxon>
        <taxon>Neoteleostei</taxon>
        <taxon>Acanthomorphata</taxon>
        <taxon>Eupercaria</taxon>
        <taxon>Perciformes</taxon>
        <taxon>Notothenioidei</taxon>
        <taxon>Nototheniidae</taxon>
        <taxon>Pagothenia</taxon>
    </lineage>
</organism>
<gene>
    <name type="primary">mtb</name>
</gene>
<reference key="1">
    <citation type="journal article" date="1999" name="Mol. Biol. Evol.">
        <title>Metallothioneins in antarctic fish: evidence for independent duplication and gene conversion.</title>
        <authorList>
            <person name="Bargelloni L."/>
            <person name="Scudiero R."/>
            <person name="Parisi E."/>
            <person name="Carginale V."/>
            <person name="Capasso C."/>
            <person name="Patarnello T."/>
        </authorList>
    </citation>
    <scope>NUCLEOTIDE SEQUENCE [MRNA]</scope>
    <source>
        <tissue>Liver</tissue>
    </source>
</reference>
<accession>P62681</accession>
<accession>Q92145</accession>
<keyword id="KW-0479">Metal-binding</keyword>
<keyword id="KW-0480">Metal-thiolate cluster</keyword>